<organism>
    <name type="scientific">Methylococcus capsulatus (strain ATCC 33009 / NCIMB 11132 / Bath)</name>
    <dbReference type="NCBI Taxonomy" id="243233"/>
    <lineage>
        <taxon>Bacteria</taxon>
        <taxon>Pseudomonadati</taxon>
        <taxon>Pseudomonadota</taxon>
        <taxon>Gammaproteobacteria</taxon>
        <taxon>Methylococcales</taxon>
        <taxon>Methylococcaceae</taxon>
        <taxon>Methylococcus</taxon>
    </lineage>
</organism>
<accession>Q609V1</accession>
<protein>
    <recommendedName>
        <fullName evidence="1">8-amino-7-oxononanoate synthase</fullName>
        <shortName evidence="1">AONS</shortName>
        <ecNumber evidence="1">2.3.1.47</ecNumber>
    </recommendedName>
    <alternativeName>
        <fullName evidence="1">7-keto-8-amino-pelargonic acid synthase</fullName>
        <shortName evidence="1">7-KAP synthase</shortName>
        <shortName evidence="1">KAPA synthase</shortName>
    </alternativeName>
    <alternativeName>
        <fullName evidence="1">8-amino-7-ketopelargonate synthase</fullName>
    </alternativeName>
</protein>
<feature type="chain" id="PRO_0000381022" description="8-amino-7-oxononanoate synthase">
    <location>
        <begin position="1"/>
        <end position="387"/>
    </location>
</feature>
<feature type="binding site" evidence="1">
    <location>
        <position position="19"/>
    </location>
    <ligand>
        <name>substrate</name>
    </ligand>
</feature>
<feature type="binding site" evidence="1">
    <location>
        <begin position="106"/>
        <end position="107"/>
    </location>
    <ligand>
        <name>pyridoxal 5'-phosphate</name>
        <dbReference type="ChEBI" id="CHEBI:597326"/>
    </ligand>
</feature>
<feature type="binding site" evidence="1">
    <location>
        <position position="131"/>
    </location>
    <ligand>
        <name>substrate</name>
    </ligand>
</feature>
<feature type="binding site" evidence="1">
    <location>
        <position position="177"/>
    </location>
    <ligand>
        <name>pyridoxal 5'-phosphate</name>
        <dbReference type="ChEBI" id="CHEBI:597326"/>
    </ligand>
</feature>
<feature type="binding site" evidence="1">
    <location>
        <position position="205"/>
    </location>
    <ligand>
        <name>pyridoxal 5'-phosphate</name>
        <dbReference type="ChEBI" id="CHEBI:597326"/>
    </ligand>
</feature>
<feature type="binding site" evidence="1">
    <location>
        <position position="234"/>
    </location>
    <ligand>
        <name>pyridoxal 5'-phosphate</name>
        <dbReference type="ChEBI" id="CHEBI:597326"/>
    </ligand>
</feature>
<feature type="binding site" evidence="1">
    <location>
        <position position="351"/>
    </location>
    <ligand>
        <name>substrate</name>
    </ligand>
</feature>
<feature type="modified residue" description="N6-(pyridoxal phosphate)lysine" evidence="1">
    <location>
        <position position="237"/>
    </location>
</feature>
<sequence length="387" mass="41450">MTFDPASALAEIKARDAYRWRRIVESPQDTRVVIDGAPRVNFCSNDYLGLANHPAVREAFRRGVDRWGVGSGASHLVCGHSAAHHALEEELAEFTGRPRALLFSTGYMANLGVVSALAGRGDTVFEDRLNHASLLDGGLLSGARFRRYRHADARALEAALAESRAETRLVVTDGVFSMDGDLAPLPELARVARDGRAWLMVDDAHGLGVLGAEGRGTLEHFGLGAPEVPVLVGTLGKALGTFGAFVAGSESLIDYLIQRARTYVYTTALPPAVAEATRVSLRLVREEPERRERLRCNVRRFRAGAASLGFGLGDLPGPIQPLVIGANADALEASRRLGERGFLVSAIRPPTVQAGTARLRITLSAAHSNEQIDGLLEALADAVPQEA</sequence>
<proteinExistence type="inferred from homology"/>
<reference key="1">
    <citation type="journal article" date="2004" name="PLoS Biol.">
        <title>Genomic insights into methanotrophy: the complete genome sequence of Methylococcus capsulatus (Bath).</title>
        <authorList>
            <person name="Ward N.L."/>
            <person name="Larsen O."/>
            <person name="Sakwa J."/>
            <person name="Bruseth L."/>
            <person name="Khouri H.M."/>
            <person name="Durkin A.S."/>
            <person name="Dimitrov G."/>
            <person name="Jiang L."/>
            <person name="Scanlan D."/>
            <person name="Kang K.H."/>
            <person name="Lewis M.R."/>
            <person name="Nelson K.E."/>
            <person name="Methe B.A."/>
            <person name="Wu M."/>
            <person name="Heidelberg J.F."/>
            <person name="Paulsen I.T."/>
            <person name="Fouts D.E."/>
            <person name="Ravel J."/>
            <person name="Tettelin H."/>
            <person name="Ren Q."/>
            <person name="Read T.D."/>
            <person name="DeBoy R.T."/>
            <person name="Seshadri R."/>
            <person name="Salzberg S.L."/>
            <person name="Jensen H.B."/>
            <person name="Birkeland N.K."/>
            <person name="Nelson W.C."/>
            <person name="Dodson R.J."/>
            <person name="Grindhaug S.H."/>
            <person name="Holt I.E."/>
            <person name="Eidhammer I."/>
            <person name="Jonasen I."/>
            <person name="Vanaken S."/>
            <person name="Utterback T.R."/>
            <person name="Feldblyum T.V."/>
            <person name="Fraser C.M."/>
            <person name="Lillehaug J.R."/>
            <person name="Eisen J.A."/>
        </authorList>
    </citation>
    <scope>NUCLEOTIDE SEQUENCE [LARGE SCALE GENOMIC DNA]</scope>
    <source>
        <strain>ATCC 33009 / NCIMB 11132 / Bath</strain>
    </source>
</reference>
<comment type="function">
    <text evidence="1">Catalyzes the decarboxylative condensation of pimeloyl-[acyl-carrier protein] and L-alanine to produce 8-amino-7-oxononanoate (AON), [acyl-carrier protein], and carbon dioxide.</text>
</comment>
<comment type="catalytic activity">
    <reaction evidence="1">
        <text>6-carboxyhexanoyl-[ACP] + L-alanine + H(+) = (8S)-8-amino-7-oxononanoate + holo-[ACP] + CO2</text>
        <dbReference type="Rhea" id="RHEA:42288"/>
        <dbReference type="Rhea" id="RHEA-COMP:9685"/>
        <dbReference type="Rhea" id="RHEA-COMP:9955"/>
        <dbReference type="ChEBI" id="CHEBI:15378"/>
        <dbReference type="ChEBI" id="CHEBI:16526"/>
        <dbReference type="ChEBI" id="CHEBI:57972"/>
        <dbReference type="ChEBI" id="CHEBI:64479"/>
        <dbReference type="ChEBI" id="CHEBI:78846"/>
        <dbReference type="ChEBI" id="CHEBI:149468"/>
        <dbReference type="EC" id="2.3.1.47"/>
    </reaction>
</comment>
<comment type="cofactor">
    <cofactor evidence="1">
        <name>pyridoxal 5'-phosphate</name>
        <dbReference type="ChEBI" id="CHEBI:597326"/>
    </cofactor>
</comment>
<comment type="pathway">
    <text evidence="1">Cofactor biosynthesis; biotin biosynthesis.</text>
</comment>
<comment type="subunit">
    <text evidence="1">Homodimer.</text>
</comment>
<comment type="similarity">
    <text evidence="1">Belongs to the class-II pyridoxal-phosphate-dependent aminotransferase family. BioF subfamily.</text>
</comment>
<evidence type="ECO:0000255" key="1">
    <source>
        <dbReference type="HAMAP-Rule" id="MF_01693"/>
    </source>
</evidence>
<dbReference type="EC" id="2.3.1.47" evidence="1"/>
<dbReference type="EMBL" id="AE017282">
    <property type="protein sequence ID" value="AAU92556.1"/>
    <property type="molecule type" value="Genomic_DNA"/>
</dbReference>
<dbReference type="RefSeq" id="WP_010960420.1">
    <property type="nucleotide sequence ID" value="NC_002977.6"/>
</dbReference>
<dbReference type="SMR" id="Q609V1"/>
<dbReference type="STRING" id="243233.MCA1126"/>
<dbReference type="GeneID" id="88223419"/>
<dbReference type="KEGG" id="mca:MCA1126"/>
<dbReference type="eggNOG" id="COG0156">
    <property type="taxonomic scope" value="Bacteria"/>
</dbReference>
<dbReference type="HOGENOM" id="CLU_015846_11_2_6"/>
<dbReference type="UniPathway" id="UPA00078"/>
<dbReference type="Proteomes" id="UP000006821">
    <property type="component" value="Chromosome"/>
</dbReference>
<dbReference type="GO" id="GO:0008710">
    <property type="term" value="F:8-amino-7-oxononanoate synthase activity"/>
    <property type="evidence" value="ECO:0007669"/>
    <property type="project" value="UniProtKB-UniRule"/>
</dbReference>
<dbReference type="GO" id="GO:0030170">
    <property type="term" value="F:pyridoxal phosphate binding"/>
    <property type="evidence" value="ECO:0007669"/>
    <property type="project" value="UniProtKB-UniRule"/>
</dbReference>
<dbReference type="GO" id="GO:0009102">
    <property type="term" value="P:biotin biosynthetic process"/>
    <property type="evidence" value="ECO:0007669"/>
    <property type="project" value="UniProtKB-UniRule"/>
</dbReference>
<dbReference type="CDD" id="cd06454">
    <property type="entry name" value="KBL_like"/>
    <property type="match status" value="1"/>
</dbReference>
<dbReference type="Gene3D" id="3.90.1150.10">
    <property type="entry name" value="Aspartate Aminotransferase, domain 1"/>
    <property type="match status" value="1"/>
</dbReference>
<dbReference type="Gene3D" id="3.40.640.10">
    <property type="entry name" value="Type I PLP-dependent aspartate aminotransferase-like (Major domain)"/>
    <property type="match status" value="1"/>
</dbReference>
<dbReference type="HAMAP" id="MF_01693">
    <property type="entry name" value="BioF_aminotrans_2"/>
    <property type="match status" value="1"/>
</dbReference>
<dbReference type="InterPro" id="IPR001917">
    <property type="entry name" value="Aminotrans_II_pyridoxalP_BS"/>
</dbReference>
<dbReference type="InterPro" id="IPR004839">
    <property type="entry name" value="Aminotransferase_I/II_large"/>
</dbReference>
<dbReference type="InterPro" id="IPR050087">
    <property type="entry name" value="AON_synthase_class-II"/>
</dbReference>
<dbReference type="InterPro" id="IPR004723">
    <property type="entry name" value="AONS_Archaea/Proteobacteria"/>
</dbReference>
<dbReference type="InterPro" id="IPR022834">
    <property type="entry name" value="AONS_Proteobacteria"/>
</dbReference>
<dbReference type="InterPro" id="IPR015424">
    <property type="entry name" value="PyrdxlP-dep_Trfase"/>
</dbReference>
<dbReference type="InterPro" id="IPR015421">
    <property type="entry name" value="PyrdxlP-dep_Trfase_major"/>
</dbReference>
<dbReference type="InterPro" id="IPR015422">
    <property type="entry name" value="PyrdxlP-dep_Trfase_small"/>
</dbReference>
<dbReference type="NCBIfam" id="TIGR00858">
    <property type="entry name" value="bioF"/>
    <property type="match status" value="1"/>
</dbReference>
<dbReference type="PANTHER" id="PTHR13693:SF100">
    <property type="entry name" value="8-AMINO-7-OXONONANOATE SYNTHASE"/>
    <property type="match status" value="1"/>
</dbReference>
<dbReference type="PANTHER" id="PTHR13693">
    <property type="entry name" value="CLASS II AMINOTRANSFERASE/8-AMINO-7-OXONONANOATE SYNTHASE"/>
    <property type="match status" value="1"/>
</dbReference>
<dbReference type="Pfam" id="PF00155">
    <property type="entry name" value="Aminotran_1_2"/>
    <property type="match status" value="1"/>
</dbReference>
<dbReference type="SUPFAM" id="SSF53383">
    <property type="entry name" value="PLP-dependent transferases"/>
    <property type="match status" value="1"/>
</dbReference>
<dbReference type="PROSITE" id="PS00599">
    <property type="entry name" value="AA_TRANSFER_CLASS_2"/>
    <property type="match status" value="1"/>
</dbReference>
<gene>
    <name evidence="1" type="primary">bioF</name>
    <name type="ordered locus">MCA1126</name>
</gene>
<name>BIOF_METCA</name>
<keyword id="KW-0093">Biotin biosynthesis</keyword>
<keyword id="KW-0663">Pyridoxal phosphate</keyword>
<keyword id="KW-1185">Reference proteome</keyword>
<keyword id="KW-0808">Transferase</keyword>